<dbReference type="EMBL" id="CP000077">
    <property type="protein sequence ID" value="AAY80518.1"/>
    <property type="molecule type" value="Genomic_DNA"/>
</dbReference>
<dbReference type="SMR" id="Q4J9L2"/>
<dbReference type="STRING" id="330779.Saci_1171"/>
<dbReference type="KEGG" id="sai:Saci_1171"/>
<dbReference type="PATRIC" id="fig|330779.12.peg.1135"/>
<dbReference type="eggNOG" id="arCOG05969">
    <property type="taxonomic scope" value="Archaea"/>
</dbReference>
<dbReference type="HOGENOM" id="CLU_1032970_0_0_2"/>
<dbReference type="Proteomes" id="UP000001018">
    <property type="component" value="Chromosome"/>
</dbReference>
<dbReference type="GO" id="GO:0005886">
    <property type="term" value="C:plasma membrane"/>
    <property type="evidence" value="ECO:0007669"/>
    <property type="project" value="UniProtKB-SubCell"/>
</dbReference>
<dbReference type="GO" id="GO:0003677">
    <property type="term" value="F:DNA binding"/>
    <property type="evidence" value="ECO:0007669"/>
    <property type="project" value="UniProtKB-KW"/>
</dbReference>
<dbReference type="Gene3D" id="1.10.10.10">
    <property type="entry name" value="Winged helix-like DNA-binding domain superfamily/Winged helix DNA-binding domain"/>
    <property type="match status" value="2"/>
</dbReference>
<dbReference type="InterPro" id="IPR038723">
    <property type="entry name" value="ArnR1-like_HTH"/>
</dbReference>
<dbReference type="InterPro" id="IPR053515">
    <property type="entry name" value="HTH-type_ArnR"/>
</dbReference>
<dbReference type="InterPro" id="IPR036388">
    <property type="entry name" value="WH-like_DNA-bd_sf"/>
</dbReference>
<dbReference type="InterPro" id="IPR036390">
    <property type="entry name" value="WH_DNA-bd_sf"/>
</dbReference>
<dbReference type="NCBIfam" id="NF041016">
    <property type="entry name" value="trans_reg_ArnR"/>
    <property type="match status" value="1"/>
</dbReference>
<dbReference type="Pfam" id="PF14947">
    <property type="entry name" value="HTH_45"/>
    <property type="match status" value="1"/>
</dbReference>
<dbReference type="SUPFAM" id="SSF46785">
    <property type="entry name" value="Winged helix' DNA-binding domain"/>
    <property type="match status" value="2"/>
</dbReference>
<reference key="1">
    <citation type="journal article" date="2005" name="J. Bacteriol.">
        <title>The genome of Sulfolobus acidocaldarius, a model organism of the Crenarchaeota.</title>
        <authorList>
            <person name="Chen L."/>
            <person name="Bruegger K."/>
            <person name="Skovgaard M."/>
            <person name="Redder P."/>
            <person name="She Q."/>
            <person name="Torarinsson E."/>
            <person name="Greve B."/>
            <person name="Awayez M."/>
            <person name="Zibat A."/>
            <person name="Klenk H.-P."/>
            <person name="Garrett R.A."/>
        </authorList>
    </citation>
    <scope>NUCLEOTIDE SEQUENCE [LARGE SCALE GENOMIC DNA]</scope>
    <source>
        <strain>ATCC 33909 / DSM 639 / JCM 8929 / NBRC 15157 / NCIMB 11770</strain>
    </source>
</reference>
<reference key="2">
    <citation type="journal article" date="2013" name="Mol. Microbiol.">
        <title>The one-component system ArnR: a membrane-bound activator of the crenarchaeal archaellum.</title>
        <authorList>
            <person name="Lassak K."/>
            <person name="Peeters E."/>
            <person name="Wrobel S."/>
            <person name="Albers S.V."/>
        </authorList>
    </citation>
    <scope>FUNCTION AS A REGULATOR</scope>
    <scope>SUBCELLULAR LOCATION</scope>
    <scope>INDUCTION</scope>
    <scope>DISRUPTION PHENOTYPE</scope>
    <source>
        <strain>ATCC 33909 / DSM 639 / JCM 8929 / NBRC 15157 / NCIMB 11770</strain>
    </source>
</reference>
<evidence type="ECO:0000255" key="1"/>
<evidence type="ECO:0000269" key="2">
    <source>
    </source>
</evidence>
<evidence type="ECO:0000303" key="3">
    <source>
    </source>
</evidence>
<evidence type="ECO:0000305" key="4"/>
<evidence type="ECO:0000305" key="5">
    <source>
    </source>
</evidence>
<evidence type="ECO:0000312" key="6">
    <source>
        <dbReference type="EMBL" id="AAY80518.1"/>
    </source>
</evidence>
<comment type="function">
    <text evidence="2">Involved in regulation of archaellar gene expression. May activate flaB transcription upon nutrient starvation by acting on the flaB promoter.</text>
</comment>
<comment type="subcellular location">
    <subcellularLocation>
        <location evidence="2">Cell membrane</location>
        <topology evidence="1">Multi-pass membrane protein</topology>
    </subcellularLocation>
</comment>
<comment type="induction">
    <text evidence="2">Not induced under starvation conditions.</text>
</comment>
<comment type="disruption phenotype">
    <text evidence="2">Deletion results in impaired swimming motility.</text>
</comment>
<name>ARNR1_SULAC</name>
<gene>
    <name evidence="3" type="primary">arnR1</name>
    <name evidence="6" type="ordered locus">Saci_1171</name>
</gene>
<organism>
    <name type="scientific">Sulfolobus acidocaldarius (strain ATCC 33909 / DSM 639 / JCM 8929 / NBRC 15157 / NCIMB 11770)</name>
    <dbReference type="NCBI Taxonomy" id="330779"/>
    <lineage>
        <taxon>Archaea</taxon>
        <taxon>Thermoproteota</taxon>
        <taxon>Thermoprotei</taxon>
        <taxon>Sulfolobales</taxon>
        <taxon>Sulfolobaceae</taxon>
        <taxon>Sulfolobus</taxon>
    </lineage>
</organism>
<keyword id="KW-0010">Activator</keyword>
<keyword id="KW-1003">Cell membrane</keyword>
<keyword id="KW-0238">DNA-binding</keyword>
<keyword id="KW-0472">Membrane</keyword>
<keyword id="KW-1185">Reference proteome</keyword>
<keyword id="KW-0804">Transcription</keyword>
<keyword id="KW-0805">Transcription regulation</keyword>
<keyword id="KW-0812">Transmembrane</keyword>
<keyword id="KW-1133">Transmembrane helix</keyword>
<feature type="chain" id="PRO_0000439512" description="HTH-type transcriptional activator ArnR1">
    <location>
        <begin position="1"/>
        <end position="269"/>
    </location>
</feature>
<feature type="topological domain" description="Cytoplasmic" evidence="5">
    <location>
        <begin position="1"/>
        <end position="217"/>
    </location>
</feature>
<feature type="transmembrane region" description="Helical" evidence="1">
    <location>
        <begin position="218"/>
        <end position="238"/>
    </location>
</feature>
<feature type="topological domain" description="Extracellular" evidence="5">
    <location>
        <begin position="239"/>
        <end position="241"/>
    </location>
</feature>
<feature type="transmembrane region" description="Helical" evidence="1">
    <location>
        <begin position="242"/>
        <end position="262"/>
    </location>
</feature>
<feature type="topological domain" description="Cytoplasmic" evidence="5">
    <location>
        <begin position="263"/>
        <end position="269"/>
    </location>
</feature>
<feature type="DNA-binding region" description="H-T-H motif" evidence="4">
    <location>
        <begin position="42"/>
        <end position="65"/>
    </location>
</feature>
<sequence length="269" mass="30786">MSSMNKRVFDILRELDSLVDFSRAKLQWDILIILATKGPSSTTEISQTINTSRKSIIDAIRKLVDKELVTKVKGDIYGLSEKGEKLLESFDSIMSINVTDKPDSSIESNSISLTNIAEYFYMLEILKMALLNKQITIDKASHELGISKQTLKYYIETFTENKLLKVVNQESVLGKSKKIYVLTDESRKLVSRLPELTRLKRNLPLKILLKLTGSYRYEIALTKVMLFNVISIPVLMYLKDQLGILEAIWLYVIILLPLLSIFAEIFNRI</sequence>
<protein>
    <recommendedName>
        <fullName evidence="4">HTH-type transcriptional activator ArnR1</fullName>
    </recommendedName>
    <alternativeName>
        <fullName evidence="4">Archaellum regulatory network protein ArnR1</fullName>
    </alternativeName>
</protein>
<accession>Q4J9L2</accession>
<proteinExistence type="evidence at protein level"/>